<sequence length="237" mass="26722">MIVFILLSLAAVLQQFVADVNFESESPRRTEKQTEIVDMHNSFRRSVNPTARNMLKMEWYPEAADNAERWAYQCIYDHSANSERVIGGIQCGENIYKSSNPRAWTEIIQSWYDEIQNFEYGVGANPPGSVIGHYTQIVWYKSYRIGCAAAYCPSYPYNYFYVCQYCPTGNMEGLTATPYTSGPTCADCPSHCDDGLCTNPCPITNTFTNCDSLLQQNSCEDSYIKTNCGASCFGQDK</sequence>
<accession>Q2XXQ2</accession>
<name>CRVP2_PSEPL</name>
<evidence type="ECO:0000250" key="1"/>
<evidence type="ECO:0000255" key="2">
    <source>
        <dbReference type="PROSITE-ProRule" id="PRU01005"/>
    </source>
</evidence>
<evidence type="ECO:0000305" key="3"/>
<protein>
    <recommendedName>
        <fullName>Cysteine-rich venom protein ENH2</fullName>
        <shortName>CRVP</shortName>
    </recommendedName>
    <alternativeName>
        <fullName>Cysteine-rich secretory protein ENH2</fullName>
        <shortName>CRISP-ENH2</shortName>
    </alternativeName>
</protein>
<reference key="1">
    <citation type="journal article" date="2006" name="Nature">
        <title>Early evolution of the venom system in lizards and snakes.</title>
        <authorList>
            <person name="Fry B.G."/>
            <person name="Vidal N."/>
            <person name="Norman J.A."/>
            <person name="Vonk F.J."/>
            <person name="Scheib H."/>
            <person name="Ramjan S.F.R."/>
            <person name="Kuruppu S."/>
            <person name="Fung K."/>
            <person name="Blair Hedges S."/>
            <person name="Richardson M.K."/>
            <person name="Hodgson W.C."/>
            <person name="Ignjatovic V."/>
            <person name="Summerhayes R."/>
            <person name="Kochva E."/>
        </authorList>
    </citation>
    <scope>NUCLEOTIDE SEQUENCE [LARGE SCALE MRNA]</scope>
    <source>
        <tissue>Venom gland</tissue>
    </source>
</reference>
<comment type="function">
    <text evidence="1">Blocks contraction of smooth muscle elicited by high potassium-induced depolarization, but does not block caffeine-stimulated contraction. May target voltage-gated calcium channels on smooth muscle (By similarity).</text>
</comment>
<comment type="subcellular location">
    <subcellularLocation>
        <location evidence="1">Secreted</location>
    </subcellularLocation>
</comment>
<comment type="tissue specificity">
    <text>Expressed by the venom gland.</text>
</comment>
<comment type="similarity">
    <text evidence="3">Belongs to the CRISP family.</text>
</comment>
<dbReference type="EMBL" id="DQ139893">
    <property type="protein sequence ID" value="AAZ75599.1"/>
    <property type="molecule type" value="mRNA"/>
</dbReference>
<dbReference type="SMR" id="Q2XXQ2"/>
<dbReference type="GO" id="GO:0005576">
    <property type="term" value="C:extracellular region"/>
    <property type="evidence" value="ECO:0007669"/>
    <property type="project" value="UniProtKB-SubCell"/>
</dbReference>
<dbReference type="GO" id="GO:0005246">
    <property type="term" value="F:calcium channel regulator activity"/>
    <property type="evidence" value="ECO:0007669"/>
    <property type="project" value="UniProtKB-KW"/>
</dbReference>
<dbReference type="GO" id="GO:0090729">
    <property type="term" value="F:toxin activity"/>
    <property type="evidence" value="ECO:0007669"/>
    <property type="project" value="UniProtKB-KW"/>
</dbReference>
<dbReference type="CDD" id="cd05383">
    <property type="entry name" value="CAP_CRISP"/>
    <property type="match status" value="1"/>
</dbReference>
<dbReference type="FunFam" id="3.40.33.10:FF:000005">
    <property type="entry name" value="Cysteine-rich secretory protein 2"/>
    <property type="match status" value="1"/>
</dbReference>
<dbReference type="Gene3D" id="3.40.33.10">
    <property type="entry name" value="CAP"/>
    <property type="match status" value="1"/>
</dbReference>
<dbReference type="Gene3D" id="1.10.10.740">
    <property type="entry name" value="Crisp domain"/>
    <property type="match status" value="1"/>
</dbReference>
<dbReference type="InterPro" id="IPR018244">
    <property type="entry name" value="Allrgn_V5/Tpx1_CS"/>
</dbReference>
<dbReference type="InterPro" id="IPR014044">
    <property type="entry name" value="CAP_dom"/>
</dbReference>
<dbReference type="InterPro" id="IPR035940">
    <property type="entry name" value="CAP_sf"/>
</dbReference>
<dbReference type="InterPro" id="IPR042076">
    <property type="entry name" value="Crisp-like_dom"/>
</dbReference>
<dbReference type="InterPro" id="IPR001283">
    <property type="entry name" value="CRISP-related"/>
</dbReference>
<dbReference type="InterPro" id="IPR013871">
    <property type="entry name" value="Cysteine_rich_secretory"/>
</dbReference>
<dbReference type="InterPro" id="IPR034117">
    <property type="entry name" value="SCP_CRISP"/>
</dbReference>
<dbReference type="InterPro" id="IPR003582">
    <property type="entry name" value="ShKT_dom"/>
</dbReference>
<dbReference type="PANTHER" id="PTHR10334">
    <property type="entry name" value="CYSTEINE-RICH SECRETORY PROTEIN-RELATED"/>
    <property type="match status" value="1"/>
</dbReference>
<dbReference type="Pfam" id="PF00188">
    <property type="entry name" value="CAP"/>
    <property type="match status" value="1"/>
</dbReference>
<dbReference type="Pfam" id="PF08562">
    <property type="entry name" value="Crisp"/>
    <property type="match status" value="1"/>
</dbReference>
<dbReference type="PRINTS" id="PR00837">
    <property type="entry name" value="V5TPXLIKE"/>
</dbReference>
<dbReference type="SMART" id="SM00198">
    <property type="entry name" value="SCP"/>
    <property type="match status" value="1"/>
</dbReference>
<dbReference type="SUPFAM" id="SSF57546">
    <property type="entry name" value="Crisp domain-like"/>
    <property type="match status" value="1"/>
</dbReference>
<dbReference type="SUPFAM" id="SSF55797">
    <property type="entry name" value="PR-1-like"/>
    <property type="match status" value="1"/>
</dbReference>
<dbReference type="PROSITE" id="PS01009">
    <property type="entry name" value="CRISP_1"/>
    <property type="match status" value="1"/>
</dbReference>
<dbReference type="PROSITE" id="PS01010">
    <property type="entry name" value="CRISP_2"/>
    <property type="match status" value="1"/>
</dbReference>
<dbReference type="PROSITE" id="PS51670">
    <property type="entry name" value="SHKT"/>
    <property type="match status" value="1"/>
</dbReference>
<organism>
    <name type="scientific">Pseudoferania polylepis</name>
    <name type="common">Macleay's water snake</name>
    <name type="synonym">Enhydris polylepis</name>
    <dbReference type="NCBI Taxonomy" id="338839"/>
    <lineage>
        <taxon>Eukaryota</taxon>
        <taxon>Metazoa</taxon>
        <taxon>Chordata</taxon>
        <taxon>Craniata</taxon>
        <taxon>Vertebrata</taxon>
        <taxon>Euteleostomi</taxon>
        <taxon>Lepidosauria</taxon>
        <taxon>Squamata</taxon>
        <taxon>Bifurcata</taxon>
        <taxon>Unidentata</taxon>
        <taxon>Episquamata</taxon>
        <taxon>Toxicofera</taxon>
        <taxon>Serpentes</taxon>
        <taxon>Colubroidea</taxon>
        <taxon>Homalopsidae</taxon>
        <taxon>Pseudoferania</taxon>
    </lineage>
</organism>
<keyword id="KW-0108">Calcium channel impairing toxin</keyword>
<keyword id="KW-1015">Disulfide bond</keyword>
<keyword id="KW-0872">Ion channel impairing toxin</keyword>
<keyword id="KW-0528">Neurotoxin</keyword>
<keyword id="KW-0964">Secreted</keyword>
<keyword id="KW-0732">Signal</keyword>
<keyword id="KW-0800">Toxin</keyword>
<feature type="signal peptide" evidence="1">
    <location>
        <begin position="1"/>
        <end position="18"/>
    </location>
</feature>
<feature type="chain" id="PRO_0000380644" description="Cysteine-rich venom protein ENH2">
    <location>
        <begin position="19"/>
        <end position="237"/>
    </location>
</feature>
<feature type="domain" description="SCP">
    <location>
        <begin position="37"/>
        <end position="165"/>
    </location>
</feature>
<feature type="domain" description="ShKT" evidence="2">
    <location>
        <begin position="201"/>
        <end position="237"/>
    </location>
</feature>
<feature type="disulfide bond" evidence="2">
    <location>
        <begin position="74"/>
        <end position="152"/>
    </location>
</feature>
<feature type="disulfide bond" evidence="2">
    <location>
        <begin position="91"/>
        <end position="166"/>
    </location>
</feature>
<feature type="disulfide bond" evidence="2">
    <location>
        <begin position="147"/>
        <end position="163"/>
    </location>
</feature>
<feature type="disulfide bond" evidence="2">
    <location>
        <begin position="185"/>
        <end position="192"/>
    </location>
</feature>
<feature type="disulfide bond" evidence="2">
    <location>
        <begin position="188"/>
        <end position="197"/>
    </location>
</feature>
<feature type="disulfide bond" evidence="2">
    <location>
        <begin position="210"/>
        <end position="228"/>
    </location>
</feature>
<feature type="disulfide bond" evidence="2">
    <location>
        <begin position="219"/>
        <end position="232"/>
    </location>
</feature>
<proteinExistence type="evidence at transcript level"/>